<evidence type="ECO:0000255" key="1">
    <source>
        <dbReference type="HAMAP-Rule" id="MF_01331"/>
    </source>
</evidence>
<evidence type="ECO:0000305" key="2"/>
<sequence length="110" mass="12167">MQAKASANMVRLAPRKARLVVDLIRGKQVGEALSVLAHTNKAASPVVEKVLKSAIANAEHNYDMNIENLVVTEAYVNEGPTLKRFRPRAMGRASRINKRTSHIHIVVTEK</sequence>
<comment type="function">
    <text evidence="1">This protein binds specifically to 23S rRNA; its binding is stimulated by other ribosomal proteins, e.g. L4, L17, and L20. It is important during the early stages of 50S assembly. It makes multiple contacts with different domains of the 23S rRNA in the assembled 50S subunit and ribosome (By similarity).</text>
</comment>
<comment type="function">
    <text evidence="1">The globular domain of the protein is located near the polypeptide exit tunnel on the outside of the subunit, while an extended beta-hairpin is found that lines the wall of the exit tunnel in the center of the 70S ribosome.</text>
</comment>
<comment type="subunit">
    <text evidence="1">Part of the 50S ribosomal subunit.</text>
</comment>
<comment type="similarity">
    <text evidence="1">Belongs to the universal ribosomal protein uL22 family.</text>
</comment>
<name>RL22_EXISA</name>
<protein>
    <recommendedName>
        <fullName evidence="1">Large ribosomal subunit protein uL22</fullName>
    </recommendedName>
    <alternativeName>
        <fullName evidence="2">50S ribosomal protein L22</fullName>
    </alternativeName>
</protein>
<dbReference type="EMBL" id="CP001615">
    <property type="protein sequence ID" value="ACQ70554.1"/>
    <property type="molecule type" value="Genomic_DNA"/>
</dbReference>
<dbReference type="RefSeq" id="WP_012727672.1">
    <property type="nucleotide sequence ID" value="NZ_MOEL01000001.1"/>
</dbReference>
<dbReference type="SMR" id="C4KZP1"/>
<dbReference type="STRING" id="360911.EAT1b_1628"/>
<dbReference type="GeneID" id="94370748"/>
<dbReference type="KEGG" id="eat:EAT1b_1628"/>
<dbReference type="eggNOG" id="COG0091">
    <property type="taxonomic scope" value="Bacteria"/>
</dbReference>
<dbReference type="HOGENOM" id="CLU_083987_3_3_9"/>
<dbReference type="OrthoDB" id="9805969at2"/>
<dbReference type="Proteomes" id="UP000000716">
    <property type="component" value="Chromosome"/>
</dbReference>
<dbReference type="GO" id="GO:0022625">
    <property type="term" value="C:cytosolic large ribosomal subunit"/>
    <property type="evidence" value="ECO:0007669"/>
    <property type="project" value="TreeGrafter"/>
</dbReference>
<dbReference type="GO" id="GO:0019843">
    <property type="term" value="F:rRNA binding"/>
    <property type="evidence" value="ECO:0007669"/>
    <property type="project" value="UniProtKB-UniRule"/>
</dbReference>
<dbReference type="GO" id="GO:0003735">
    <property type="term" value="F:structural constituent of ribosome"/>
    <property type="evidence" value="ECO:0007669"/>
    <property type="project" value="InterPro"/>
</dbReference>
<dbReference type="GO" id="GO:0006412">
    <property type="term" value="P:translation"/>
    <property type="evidence" value="ECO:0007669"/>
    <property type="project" value="UniProtKB-UniRule"/>
</dbReference>
<dbReference type="CDD" id="cd00336">
    <property type="entry name" value="Ribosomal_L22"/>
    <property type="match status" value="1"/>
</dbReference>
<dbReference type="FunFam" id="3.90.470.10:FF:000001">
    <property type="entry name" value="50S ribosomal protein L22"/>
    <property type="match status" value="1"/>
</dbReference>
<dbReference type="Gene3D" id="3.90.470.10">
    <property type="entry name" value="Ribosomal protein L22/L17"/>
    <property type="match status" value="1"/>
</dbReference>
<dbReference type="HAMAP" id="MF_01331_B">
    <property type="entry name" value="Ribosomal_uL22_B"/>
    <property type="match status" value="1"/>
</dbReference>
<dbReference type="InterPro" id="IPR001063">
    <property type="entry name" value="Ribosomal_uL22"/>
</dbReference>
<dbReference type="InterPro" id="IPR005727">
    <property type="entry name" value="Ribosomal_uL22_bac/chlpt-type"/>
</dbReference>
<dbReference type="InterPro" id="IPR047867">
    <property type="entry name" value="Ribosomal_uL22_bac/org-type"/>
</dbReference>
<dbReference type="InterPro" id="IPR018260">
    <property type="entry name" value="Ribosomal_uL22_CS"/>
</dbReference>
<dbReference type="InterPro" id="IPR036394">
    <property type="entry name" value="Ribosomal_uL22_sf"/>
</dbReference>
<dbReference type="NCBIfam" id="TIGR01044">
    <property type="entry name" value="rplV_bact"/>
    <property type="match status" value="1"/>
</dbReference>
<dbReference type="PANTHER" id="PTHR13501">
    <property type="entry name" value="CHLOROPLAST 50S RIBOSOMAL PROTEIN L22-RELATED"/>
    <property type="match status" value="1"/>
</dbReference>
<dbReference type="PANTHER" id="PTHR13501:SF8">
    <property type="entry name" value="LARGE RIBOSOMAL SUBUNIT PROTEIN UL22M"/>
    <property type="match status" value="1"/>
</dbReference>
<dbReference type="Pfam" id="PF00237">
    <property type="entry name" value="Ribosomal_L22"/>
    <property type="match status" value="1"/>
</dbReference>
<dbReference type="SUPFAM" id="SSF54843">
    <property type="entry name" value="Ribosomal protein L22"/>
    <property type="match status" value="1"/>
</dbReference>
<dbReference type="PROSITE" id="PS00464">
    <property type="entry name" value="RIBOSOMAL_L22"/>
    <property type="match status" value="1"/>
</dbReference>
<proteinExistence type="inferred from homology"/>
<reference key="1">
    <citation type="journal article" date="2011" name="J. Bacteriol.">
        <title>Complete genome sequence of the Thermophilic Bacterium Exiguobacterium sp. AT1b.</title>
        <authorList>
            <person name="Vishnivetskaya T.A."/>
            <person name="Lucas S."/>
            <person name="Copeland A."/>
            <person name="Lapidus A."/>
            <person name="Glavina del Rio T."/>
            <person name="Dalin E."/>
            <person name="Tice H."/>
            <person name="Bruce D.C."/>
            <person name="Goodwin L.A."/>
            <person name="Pitluck S."/>
            <person name="Saunders E."/>
            <person name="Brettin T."/>
            <person name="Detter C."/>
            <person name="Han C."/>
            <person name="Larimer F."/>
            <person name="Land M.L."/>
            <person name="Hauser L.J."/>
            <person name="Kyrpides N.C."/>
            <person name="Ovchinnikova G."/>
            <person name="Kathariou S."/>
            <person name="Ramaley R.F."/>
            <person name="Rodrigues D.F."/>
            <person name="Hendrix C."/>
            <person name="Richardson P."/>
            <person name="Tiedje J.M."/>
        </authorList>
    </citation>
    <scope>NUCLEOTIDE SEQUENCE [LARGE SCALE GENOMIC DNA]</scope>
    <source>
        <strain>ATCC BAA-1283 / AT1b</strain>
    </source>
</reference>
<feature type="chain" id="PRO_1000214605" description="Large ribosomal subunit protein uL22">
    <location>
        <begin position="1"/>
        <end position="110"/>
    </location>
</feature>
<gene>
    <name evidence="1" type="primary">rplV</name>
    <name type="ordered locus">EAT1b_1628</name>
</gene>
<keyword id="KW-0687">Ribonucleoprotein</keyword>
<keyword id="KW-0689">Ribosomal protein</keyword>
<keyword id="KW-0694">RNA-binding</keyword>
<keyword id="KW-0699">rRNA-binding</keyword>
<accession>C4KZP1</accession>
<organism>
    <name type="scientific">Exiguobacterium sp. (strain ATCC BAA-1283 / AT1b)</name>
    <dbReference type="NCBI Taxonomy" id="360911"/>
    <lineage>
        <taxon>Bacteria</taxon>
        <taxon>Bacillati</taxon>
        <taxon>Bacillota</taxon>
        <taxon>Bacilli</taxon>
        <taxon>Bacillales</taxon>
        <taxon>Bacillales Family XII. Incertae Sedis</taxon>
        <taxon>Exiguobacterium</taxon>
    </lineage>
</organism>